<accession>B3E7B3</accession>
<protein>
    <recommendedName>
        <fullName evidence="1">Succinate--CoA ligase [ADP-forming] subunit beta</fullName>
        <ecNumber evidence="1">6.2.1.5</ecNumber>
    </recommendedName>
    <alternativeName>
        <fullName evidence="1">Succinyl-CoA synthetase subunit beta</fullName>
        <shortName evidence="1">SCS-beta</shortName>
    </alternativeName>
</protein>
<reference key="1">
    <citation type="submission" date="2008-05" db="EMBL/GenBank/DDBJ databases">
        <title>Complete sequence of chromosome of Geobacter lovleyi SZ.</title>
        <authorList>
            <consortium name="US DOE Joint Genome Institute"/>
            <person name="Lucas S."/>
            <person name="Copeland A."/>
            <person name="Lapidus A."/>
            <person name="Glavina del Rio T."/>
            <person name="Dalin E."/>
            <person name="Tice H."/>
            <person name="Bruce D."/>
            <person name="Goodwin L."/>
            <person name="Pitluck S."/>
            <person name="Chertkov O."/>
            <person name="Meincke L."/>
            <person name="Brettin T."/>
            <person name="Detter J.C."/>
            <person name="Han C."/>
            <person name="Tapia R."/>
            <person name="Kuske C.R."/>
            <person name="Schmutz J."/>
            <person name="Larimer F."/>
            <person name="Land M."/>
            <person name="Hauser L."/>
            <person name="Kyrpides N."/>
            <person name="Mikhailova N."/>
            <person name="Sung Y."/>
            <person name="Fletcher K.E."/>
            <person name="Ritalahti K.M."/>
            <person name="Loeffler F.E."/>
            <person name="Richardson P."/>
        </authorList>
    </citation>
    <scope>NUCLEOTIDE SEQUENCE [LARGE SCALE GENOMIC DNA]</scope>
    <source>
        <strain>ATCC BAA-1151 / DSM 17278 / SZ</strain>
    </source>
</reference>
<gene>
    <name evidence="1" type="primary">sucC</name>
    <name type="ordered locus">Glov_2717</name>
</gene>
<feature type="chain" id="PRO_1000129193" description="Succinate--CoA ligase [ADP-forming] subunit beta">
    <location>
        <begin position="1"/>
        <end position="387"/>
    </location>
</feature>
<feature type="domain" description="ATP-grasp" evidence="1">
    <location>
        <begin position="9"/>
        <end position="243"/>
    </location>
</feature>
<feature type="binding site" evidence="1">
    <location>
        <position position="45"/>
    </location>
    <ligand>
        <name>ATP</name>
        <dbReference type="ChEBI" id="CHEBI:30616"/>
    </ligand>
</feature>
<feature type="binding site" evidence="1">
    <location>
        <begin position="52"/>
        <end position="54"/>
    </location>
    <ligand>
        <name>ATP</name>
        <dbReference type="ChEBI" id="CHEBI:30616"/>
    </ligand>
</feature>
<feature type="binding site" evidence="1">
    <location>
        <position position="98"/>
    </location>
    <ligand>
        <name>ATP</name>
        <dbReference type="ChEBI" id="CHEBI:30616"/>
    </ligand>
</feature>
<feature type="binding site" evidence="1">
    <location>
        <position position="101"/>
    </location>
    <ligand>
        <name>ATP</name>
        <dbReference type="ChEBI" id="CHEBI:30616"/>
    </ligand>
</feature>
<feature type="binding site" evidence="1">
    <location>
        <position position="106"/>
    </location>
    <ligand>
        <name>ATP</name>
        <dbReference type="ChEBI" id="CHEBI:30616"/>
    </ligand>
</feature>
<feature type="binding site" evidence="1">
    <location>
        <position position="198"/>
    </location>
    <ligand>
        <name>Mg(2+)</name>
        <dbReference type="ChEBI" id="CHEBI:18420"/>
    </ligand>
</feature>
<feature type="binding site" evidence="1">
    <location>
        <position position="212"/>
    </location>
    <ligand>
        <name>Mg(2+)</name>
        <dbReference type="ChEBI" id="CHEBI:18420"/>
    </ligand>
</feature>
<feature type="binding site" evidence="1">
    <location>
        <position position="263"/>
    </location>
    <ligand>
        <name>substrate</name>
        <note>ligand shared with subunit alpha</note>
    </ligand>
</feature>
<feature type="binding site" evidence="1">
    <location>
        <begin position="320"/>
        <end position="322"/>
    </location>
    <ligand>
        <name>substrate</name>
        <note>ligand shared with subunit alpha</note>
    </ligand>
</feature>
<evidence type="ECO:0000255" key="1">
    <source>
        <dbReference type="HAMAP-Rule" id="MF_00558"/>
    </source>
</evidence>
<proteinExistence type="inferred from homology"/>
<comment type="function">
    <text evidence="1">Succinyl-CoA synthetase functions in the citric acid cycle (TCA), coupling the hydrolysis of succinyl-CoA to the synthesis of either ATP or GTP and thus represents the only step of substrate-level phosphorylation in the TCA. The beta subunit provides nucleotide specificity of the enzyme and binds the substrate succinate, while the binding sites for coenzyme A and phosphate are found in the alpha subunit.</text>
</comment>
<comment type="catalytic activity">
    <reaction evidence="1">
        <text>succinate + ATP + CoA = succinyl-CoA + ADP + phosphate</text>
        <dbReference type="Rhea" id="RHEA:17661"/>
        <dbReference type="ChEBI" id="CHEBI:30031"/>
        <dbReference type="ChEBI" id="CHEBI:30616"/>
        <dbReference type="ChEBI" id="CHEBI:43474"/>
        <dbReference type="ChEBI" id="CHEBI:57287"/>
        <dbReference type="ChEBI" id="CHEBI:57292"/>
        <dbReference type="ChEBI" id="CHEBI:456216"/>
        <dbReference type="EC" id="6.2.1.5"/>
    </reaction>
    <physiologicalReaction direction="right-to-left" evidence="1">
        <dbReference type="Rhea" id="RHEA:17663"/>
    </physiologicalReaction>
</comment>
<comment type="catalytic activity">
    <reaction evidence="1">
        <text>GTP + succinate + CoA = succinyl-CoA + GDP + phosphate</text>
        <dbReference type="Rhea" id="RHEA:22120"/>
        <dbReference type="ChEBI" id="CHEBI:30031"/>
        <dbReference type="ChEBI" id="CHEBI:37565"/>
        <dbReference type="ChEBI" id="CHEBI:43474"/>
        <dbReference type="ChEBI" id="CHEBI:57287"/>
        <dbReference type="ChEBI" id="CHEBI:57292"/>
        <dbReference type="ChEBI" id="CHEBI:58189"/>
    </reaction>
    <physiologicalReaction direction="right-to-left" evidence="1">
        <dbReference type="Rhea" id="RHEA:22122"/>
    </physiologicalReaction>
</comment>
<comment type="cofactor">
    <cofactor evidence="1">
        <name>Mg(2+)</name>
        <dbReference type="ChEBI" id="CHEBI:18420"/>
    </cofactor>
    <text evidence="1">Binds 1 Mg(2+) ion per subunit.</text>
</comment>
<comment type="pathway">
    <text evidence="1">Carbohydrate metabolism; tricarboxylic acid cycle; succinate from succinyl-CoA (ligase route): step 1/1.</text>
</comment>
<comment type="subunit">
    <text evidence="1">Heterotetramer of two alpha and two beta subunits.</text>
</comment>
<comment type="similarity">
    <text evidence="1">Belongs to the succinate/malate CoA ligase beta subunit family.</text>
</comment>
<name>SUCC_TRIL1</name>
<organism>
    <name type="scientific">Trichlorobacter lovleyi (strain ATCC BAA-1151 / DSM 17278 / SZ)</name>
    <name type="common">Geobacter lovleyi</name>
    <dbReference type="NCBI Taxonomy" id="398767"/>
    <lineage>
        <taxon>Bacteria</taxon>
        <taxon>Pseudomonadati</taxon>
        <taxon>Thermodesulfobacteriota</taxon>
        <taxon>Desulfuromonadia</taxon>
        <taxon>Geobacterales</taxon>
        <taxon>Geobacteraceae</taxon>
        <taxon>Trichlorobacter</taxon>
    </lineage>
</organism>
<sequence>MNIHEYQAKEILSTYGIPVPRNRVALTADQVERAAKMMGGHCVVKAQIYAGGRGKAGGVKLVHHPEQASDVAKELFGKRLVTKQTGPEGLKVRRILVEETVEIAREFYLSITLDRETSRYCLIASAEGGMDIEEVAQKSPDKIHVLTIDPFTGLRTYQARKIALALGLSGAVCEDCVELILNTYKCCLEKDCSLIEINPLVVTRAGWLLAMDAKISFDDNAVYRHREYPDMVDYSQLDPLEITAGKYDLAYIKLTGNIGCMVNGAGLAMATLDVLKEFGGEPANFLDVGGGATREKVAEAFKIILQDSDVKAVFVNIFGGIMRCDVIAQGIIEAANEVHCPLPIVVRMDGSNVEDGKKLLLESGLNVQIGDNLGDGAQKIVAMLAKA</sequence>
<keyword id="KW-0067">ATP-binding</keyword>
<keyword id="KW-0436">Ligase</keyword>
<keyword id="KW-0460">Magnesium</keyword>
<keyword id="KW-0479">Metal-binding</keyword>
<keyword id="KW-0547">Nucleotide-binding</keyword>
<keyword id="KW-1185">Reference proteome</keyword>
<keyword id="KW-0816">Tricarboxylic acid cycle</keyword>
<dbReference type="EC" id="6.2.1.5" evidence="1"/>
<dbReference type="EMBL" id="CP001089">
    <property type="protein sequence ID" value="ACD96430.1"/>
    <property type="molecule type" value="Genomic_DNA"/>
</dbReference>
<dbReference type="RefSeq" id="WP_012470759.1">
    <property type="nucleotide sequence ID" value="NC_010814.1"/>
</dbReference>
<dbReference type="SMR" id="B3E7B3"/>
<dbReference type="STRING" id="398767.Glov_2717"/>
<dbReference type="KEGG" id="glo:Glov_2717"/>
<dbReference type="eggNOG" id="COG0045">
    <property type="taxonomic scope" value="Bacteria"/>
</dbReference>
<dbReference type="HOGENOM" id="CLU_037430_0_2_7"/>
<dbReference type="OrthoDB" id="9802602at2"/>
<dbReference type="UniPathway" id="UPA00223">
    <property type="reaction ID" value="UER00999"/>
</dbReference>
<dbReference type="Proteomes" id="UP000002420">
    <property type="component" value="Chromosome"/>
</dbReference>
<dbReference type="GO" id="GO:0005829">
    <property type="term" value="C:cytosol"/>
    <property type="evidence" value="ECO:0007669"/>
    <property type="project" value="TreeGrafter"/>
</dbReference>
<dbReference type="GO" id="GO:0042709">
    <property type="term" value="C:succinate-CoA ligase complex"/>
    <property type="evidence" value="ECO:0007669"/>
    <property type="project" value="TreeGrafter"/>
</dbReference>
<dbReference type="GO" id="GO:0005524">
    <property type="term" value="F:ATP binding"/>
    <property type="evidence" value="ECO:0007669"/>
    <property type="project" value="UniProtKB-UniRule"/>
</dbReference>
<dbReference type="GO" id="GO:0000287">
    <property type="term" value="F:magnesium ion binding"/>
    <property type="evidence" value="ECO:0007669"/>
    <property type="project" value="UniProtKB-UniRule"/>
</dbReference>
<dbReference type="GO" id="GO:0004775">
    <property type="term" value="F:succinate-CoA ligase (ADP-forming) activity"/>
    <property type="evidence" value="ECO:0007669"/>
    <property type="project" value="UniProtKB-UniRule"/>
</dbReference>
<dbReference type="GO" id="GO:0004776">
    <property type="term" value="F:succinate-CoA ligase (GDP-forming) activity"/>
    <property type="evidence" value="ECO:0007669"/>
    <property type="project" value="RHEA"/>
</dbReference>
<dbReference type="GO" id="GO:0006104">
    <property type="term" value="P:succinyl-CoA metabolic process"/>
    <property type="evidence" value="ECO:0007669"/>
    <property type="project" value="TreeGrafter"/>
</dbReference>
<dbReference type="GO" id="GO:0006099">
    <property type="term" value="P:tricarboxylic acid cycle"/>
    <property type="evidence" value="ECO:0007669"/>
    <property type="project" value="UniProtKB-UniRule"/>
</dbReference>
<dbReference type="FunFam" id="3.30.1490.20:FF:000002">
    <property type="entry name" value="Succinate--CoA ligase [ADP-forming] subunit beta"/>
    <property type="match status" value="1"/>
</dbReference>
<dbReference type="FunFam" id="3.30.470.20:FF:000002">
    <property type="entry name" value="Succinate--CoA ligase [ADP-forming] subunit beta"/>
    <property type="match status" value="1"/>
</dbReference>
<dbReference type="FunFam" id="3.40.50.261:FF:000001">
    <property type="entry name" value="Succinate--CoA ligase [ADP-forming] subunit beta"/>
    <property type="match status" value="1"/>
</dbReference>
<dbReference type="Gene3D" id="3.30.1490.20">
    <property type="entry name" value="ATP-grasp fold, A domain"/>
    <property type="match status" value="1"/>
</dbReference>
<dbReference type="Gene3D" id="3.30.470.20">
    <property type="entry name" value="ATP-grasp fold, B domain"/>
    <property type="match status" value="1"/>
</dbReference>
<dbReference type="Gene3D" id="3.40.50.261">
    <property type="entry name" value="Succinyl-CoA synthetase domains"/>
    <property type="match status" value="1"/>
</dbReference>
<dbReference type="HAMAP" id="MF_00558">
    <property type="entry name" value="Succ_CoA_beta"/>
    <property type="match status" value="1"/>
</dbReference>
<dbReference type="InterPro" id="IPR011761">
    <property type="entry name" value="ATP-grasp"/>
</dbReference>
<dbReference type="InterPro" id="IPR013650">
    <property type="entry name" value="ATP-grasp_succ-CoA_synth-type"/>
</dbReference>
<dbReference type="InterPro" id="IPR013815">
    <property type="entry name" value="ATP_grasp_subdomain_1"/>
</dbReference>
<dbReference type="InterPro" id="IPR017866">
    <property type="entry name" value="Succ-CoA_synthase_bsu_CS"/>
</dbReference>
<dbReference type="InterPro" id="IPR005811">
    <property type="entry name" value="SUCC_ACL_C"/>
</dbReference>
<dbReference type="InterPro" id="IPR005809">
    <property type="entry name" value="Succ_CoA_ligase-like_bsu"/>
</dbReference>
<dbReference type="InterPro" id="IPR016102">
    <property type="entry name" value="Succinyl-CoA_synth-like"/>
</dbReference>
<dbReference type="NCBIfam" id="NF001913">
    <property type="entry name" value="PRK00696.1"/>
    <property type="match status" value="1"/>
</dbReference>
<dbReference type="NCBIfam" id="TIGR01016">
    <property type="entry name" value="sucCoAbeta"/>
    <property type="match status" value="1"/>
</dbReference>
<dbReference type="PANTHER" id="PTHR11815:SF10">
    <property type="entry name" value="SUCCINATE--COA LIGASE [GDP-FORMING] SUBUNIT BETA, MITOCHONDRIAL"/>
    <property type="match status" value="1"/>
</dbReference>
<dbReference type="PANTHER" id="PTHR11815">
    <property type="entry name" value="SUCCINYL-COA SYNTHETASE BETA CHAIN"/>
    <property type="match status" value="1"/>
</dbReference>
<dbReference type="Pfam" id="PF08442">
    <property type="entry name" value="ATP-grasp_2"/>
    <property type="match status" value="1"/>
</dbReference>
<dbReference type="Pfam" id="PF00549">
    <property type="entry name" value="Ligase_CoA"/>
    <property type="match status" value="1"/>
</dbReference>
<dbReference type="PIRSF" id="PIRSF001554">
    <property type="entry name" value="SucCS_beta"/>
    <property type="match status" value="1"/>
</dbReference>
<dbReference type="SUPFAM" id="SSF56059">
    <property type="entry name" value="Glutathione synthetase ATP-binding domain-like"/>
    <property type="match status" value="1"/>
</dbReference>
<dbReference type="SUPFAM" id="SSF52210">
    <property type="entry name" value="Succinyl-CoA synthetase domains"/>
    <property type="match status" value="1"/>
</dbReference>
<dbReference type="PROSITE" id="PS50975">
    <property type="entry name" value="ATP_GRASP"/>
    <property type="match status" value="1"/>
</dbReference>
<dbReference type="PROSITE" id="PS01217">
    <property type="entry name" value="SUCCINYL_COA_LIG_3"/>
    <property type="match status" value="1"/>
</dbReference>